<reference key="1">
    <citation type="journal article" date="2012" name="PLoS Genet.">
        <title>Comparative analysis of the genomes of two field isolates of the rice blast fungus Magnaporthe oryzae.</title>
        <authorList>
            <person name="Xue M."/>
            <person name="Yang J."/>
            <person name="Li Z."/>
            <person name="Hu S."/>
            <person name="Yao N."/>
            <person name="Dean R.A."/>
            <person name="Zhao W."/>
            <person name="Shen M."/>
            <person name="Zhang H."/>
            <person name="Li C."/>
            <person name="Liu L."/>
            <person name="Cao L."/>
            <person name="Xu X."/>
            <person name="Xing Y."/>
            <person name="Hsiang T."/>
            <person name="Zhang Z."/>
            <person name="Xu J.-R."/>
            <person name="Peng Y.-L."/>
        </authorList>
    </citation>
    <scope>NUCLEOTIDE SEQUENCE [LARGE SCALE GENOMIC DNA]</scope>
    <source>
        <strain>Y34</strain>
    </source>
</reference>
<reference key="2">
    <citation type="journal article" date="2015" name="Front. Plant Sci.">
        <title>Crucial roles of abscisic acid biogenesis in virulence of rice blast fungus Magnaporthe oryzae.</title>
        <authorList>
            <person name="Spence C.A."/>
            <person name="Lakshmanan V."/>
            <person name="Donofrio N."/>
            <person name="Bais H.P."/>
        </authorList>
    </citation>
    <scope>IDENTIFICATION</scope>
    <scope>INDUCTION</scope>
    <scope>FUNCTION</scope>
    <scope>DISRUPTION PHENOTYPE</scope>
    <scope>PATHWAY</scope>
</reference>
<reference key="3">
    <citation type="journal article" date="2017" name="Front. Plant Sci.">
        <title>Abscisic acid as pathogen effector and immune regulator.</title>
        <authorList>
            <person name="Lievens L."/>
            <person name="Pollier J."/>
            <person name="Goossens A."/>
            <person name="Beyaert R."/>
            <person name="Staal J."/>
        </authorList>
    </citation>
    <scope>FUNCTION</scope>
</reference>
<protein>
    <recommendedName>
        <fullName evidence="5">Short-chain dehydrogenase/reductase ABA4</fullName>
        <ecNumber evidence="7">1.1.1.-</ecNumber>
    </recommendedName>
    <alternativeName>
        <fullName evidence="5">Abscisic acid biosynthesis protein 4</fullName>
    </alternativeName>
</protein>
<name>ABA4_PYRO3</name>
<accession>L7I518</accession>
<organism>
    <name type="scientific">Pyricularia oryzae (strain Y34)</name>
    <name type="common">Rice blast fungus</name>
    <name type="synonym">Magnaporthe oryzae</name>
    <dbReference type="NCBI Taxonomy" id="1143189"/>
    <lineage>
        <taxon>Eukaryota</taxon>
        <taxon>Fungi</taxon>
        <taxon>Dikarya</taxon>
        <taxon>Ascomycota</taxon>
        <taxon>Pezizomycotina</taxon>
        <taxon>Sordariomycetes</taxon>
        <taxon>Sordariomycetidae</taxon>
        <taxon>Magnaporthales</taxon>
        <taxon>Pyriculariaceae</taxon>
        <taxon>Pyricularia</taxon>
    </lineage>
</organism>
<comment type="function">
    <text evidence="3 4">Short-chain dehydrogenase/reductase involved in the biosynthesis of abscisic acid (ABA), a phytohormone that acts antagonistically toward salicylic acid (SA), jasmonic acid (JA) and ethylene (ETH) signaling, to impede plant defense responses (PubMed:26648962). During pathogen-host interaction, ABA plays a dual role in disease severity by increasing plant susceptibility and accelerating pathogenesis in the fungus itself (PubMed:26648962). The first step of the pathway catalyzes the reaction from farnesyl diphosphate to alpha-ionylideneethane performed by the alpha-ionylideneethane synthase ABA3 via a three-step reaction mechanism involving 2 neutral intermediates, beta-farnesene and allofarnesene (By similarity). The cytochrome P450 monooxygenase ABA1 might then be involved in the conversion of alpha-ionylideneethane to alpha-ionylideneacetic acid (By similarity). Alpha-ionylideneacetic acid is further converted to abscisic acid in 2 steps involving the cytochrome P450 monooxygenase ABA2 and the short-chain dehydrogenase/reductase ABA4, via the intermediates 1'-deoxy-ABA or 1',4'-trans-diol-ABA, depending on the order of action of these 2 enzymes (By similarity). ABA2 is responsible for the hydroxylation of carbon atom C-1' and ABA4 might be involved in the oxidation of the C-4' carbon atom (By similarity).</text>
</comment>
<comment type="pathway">
    <text evidence="4">Hormone biosynthesis.</text>
</comment>
<comment type="induction">
    <text evidence="4">Expression is up-regulated in spores.</text>
</comment>
<comment type="disruption phenotype">
    <text evidence="4">Leads to slower vegetative growth and dark pigmentation of the mycelia (PubMed:26648962). Also leads to the secretion of a very dark pigment (PubMed:26648962). Affects sporulation and appressoria formation (PubMed:26648962). Shows hyper-branching of the germ tubes, as well as unusual bulges along the hyphae with less melainized appressoria (PubMed:26648962). Significantly reduces the production of abscisic acid (ABA) (PubMed:26648962). Highly reduces virulence (PubMed:26648962).</text>
</comment>
<comment type="similarity">
    <text evidence="6">Belongs to the short-chain dehydrogenases/reductases (SDR) family.</text>
</comment>
<sequence>MGSIENPEIMASTMLHILPLAGKVYGITGGASGIGLATAQILSRRGATVCIADVDPKAMASAEVYFSGQSGAKYSITKVDISKRSEVNAWVDGIISQFGRLDGAANVAGVIGKIHGAVPVSEMDDDEWDKIVAVNLTGTMYCMRAQLRNIVDGGSIVNVASIHGLKGFANHAAYDASKHGVIGLTKAAAQENGAREIRVNAVAPGAIYTPLMQKNWDITGRPKDAPFDDPSAFRRQGTAMETGNVIAFLLGPDSTFVSGSVYSVDGAWI</sequence>
<feature type="chain" id="PRO_0000448424" description="Short-chain dehydrogenase/reductase ABA4">
    <location>
        <begin position="1"/>
        <end position="269"/>
    </location>
</feature>
<feature type="active site" description="Proton donor" evidence="2">
    <location>
        <position position="174"/>
    </location>
</feature>
<feature type="active site" description="Lowers pKa of active site Tyr" evidence="2">
    <location>
        <position position="178"/>
    </location>
</feature>
<feature type="binding site" evidence="1">
    <location>
        <position position="34"/>
    </location>
    <ligand>
        <name>NADP(+)</name>
        <dbReference type="ChEBI" id="CHEBI:58349"/>
    </ligand>
</feature>
<feature type="binding site" evidence="1">
    <location>
        <position position="80"/>
    </location>
    <ligand>
        <name>NADP(+)</name>
        <dbReference type="ChEBI" id="CHEBI:58349"/>
    </ligand>
</feature>
<feature type="binding site" evidence="1">
    <location>
        <position position="144"/>
    </location>
    <ligand>
        <name>NADP(+)</name>
        <dbReference type="ChEBI" id="CHEBI:58349"/>
    </ligand>
</feature>
<feature type="binding site" evidence="2">
    <location>
        <position position="174"/>
    </location>
    <ligand>
        <name>NADP(+)</name>
        <dbReference type="ChEBI" id="CHEBI:58349"/>
    </ligand>
</feature>
<feature type="binding site" evidence="2">
    <location>
        <position position="178"/>
    </location>
    <ligand>
        <name>NADP(+)</name>
        <dbReference type="ChEBI" id="CHEBI:58349"/>
    </ligand>
</feature>
<feature type="binding site" evidence="2">
    <location>
        <position position="207"/>
    </location>
    <ligand>
        <name>NADP(+)</name>
        <dbReference type="ChEBI" id="CHEBI:58349"/>
    </ligand>
</feature>
<feature type="binding site" evidence="1">
    <location>
        <position position="209"/>
    </location>
    <ligand>
        <name>NADP(+)</name>
        <dbReference type="ChEBI" id="CHEBI:58349"/>
    </ligand>
</feature>
<evidence type="ECO:0000250" key="1">
    <source>
        <dbReference type="UniProtKB" id="L0E2Z4"/>
    </source>
</evidence>
<evidence type="ECO:0000250" key="2">
    <source>
        <dbReference type="UniProtKB" id="O93868"/>
    </source>
</evidence>
<evidence type="ECO:0000250" key="3">
    <source>
        <dbReference type="UniProtKB" id="Q14RS1"/>
    </source>
</evidence>
<evidence type="ECO:0000269" key="4">
    <source>
    </source>
</evidence>
<evidence type="ECO:0000303" key="5">
    <source>
    </source>
</evidence>
<evidence type="ECO:0000305" key="6"/>
<evidence type="ECO:0000305" key="7">
    <source>
    </source>
</evidence>
<gene>
    <name type="primary">ABA4</name>
    <name type="ORF">OOU_Y34scaffold00552g20</name>
</gene>
<keyword id="KW-0521">NADP</keyword>
<keyword id="KW-0560">Oxidoreductase</keyword>
<keyword id="KW-0843">Virulence</keyword>
<proteinExistence type="evidence at transcript level"/>
<dbReference type="EC" id="1.1.1.-" evidence="7"/>
<dbReference type="EMBL" id="JH793052">
    <property type="protein sequence ID" value="ELQ38066.1"/>
    <property type="molecule type" value="Genomic_DNA"/>
</dbReference>
<dbReference type="SMR" id="L7I518"/>
<dbReference type="OrthoDB" id="678818at147550"/>
<dbReference type="Proteomes" id="UP000011086">
    <property type="component" value="Unassembled WGS sequence"/>
</dbReference>
<dbReference type="GO" id="GO:0016491">
    <property type="term" value="F:oxidoreductase activity"/>
    <property type="evidence" value="ECO:0007669"/>
    <property type="project" value="UniProtKB-KW"/>
</dbReference>
<dbReference type="GO" id="GO:0009688">
    <property type="term" value="P:abscisic acid biosynthetic process"/>
    <property type="evidence" value="ECO:0000315"/>
    <property type="project" value="GO_Central"/>
</dbReference>
<dbReference type="CDD" id="cd05233">
    <property type="entry name" value="SDR_c"/>
    <property type="match status" value="1"/>
</dbReference>
<dbReference type="FunFam" id="3.40.50.720:FF:000084">
    <property type="entry name" value="Short-chain dehydrogenase reductase"/>
    <property type="match status" value="1"/>
</dbReference>
<dbReference type="Gene3D" id="3.40.50.720">
    <property type="entry name" value="NAD(P)-binding Rossmann-like Domain"/>
    <property type="match status" value="1"/>
</dbReference>
<dbReference type="InterPro" id="IPR036291">
    <property type="entry name" value="NAD(P)-bd_dom_sf"/>
</dbReference>
<dbReference type="InterPro" id="IPR002347">
    <property type="entry name" value="SDR_fam"/>
</dbReference>
<dbReference type="PANTHER" id="PTHR24321">
    <property type="entry name" value="DEHYDROGENASES, SHORT CHAIN"/>
    <property type="match status" value="1"/>
</dbReference>
<dbReference type="PANTHER" id="PTHR24321:SF8">
    <property type="entry name" value="ESTRADIOL 17-BETA-DEHYDROGENASE 8-RELATED"/>
    <property type="match status" value="1"/>
</dbReference>
<dbReference type="Pfam" id="PF13561">
    <property type="entry name" value="adh_short_C2"/>
    <property type="match status" value="1"/>
</dbReference>
<dbReference type="PRINTS" id="PR00081">
    <property type="entry name" value="GDHRDH"/>
</dbReference>
<dbReference type="PRINTS" id="PR00080">
    <property type="entry name" value="SDRFAMILY"/>
</dbReference>
<dbReference type="SUPFAM" id="SSF51735">
    <property type="entry name" value="NAD(P)-binding Rossmann-fold domains"/>
    <property type="match status" value="1"/>
</dbReference>